<evidence type="ECO:0000255" key="1">
    <source>
        <dbReference type="HAMAP-Rule" id="MF_00368"/>
    </source>
</evidence>
<evidence type="ECO:0000305" key="2"/>
<reference key="1">
    <citation type="journal article" date="2009" name="J. Bacteriol.">
        <title>Complete genome sequence of Haemophilus parasuis SH0165.</title>
        <authorList>
            <person name="Yue M."/>
            <person name="Yang F."/>
            <person name="Yang J."/>
            <person name="Bei W."/>
            <person name="Cai X."/>
            <person name="Chen L."/>
            <person name="Dong J."/>
            <person name="Zhou R."/>
            <person name="Jin M."/>
            <person name="Jin Q."/>
            <person name="Chen H."/>
        </authorList>
    </citation>
    <scope>NUCLEOTIDE SEQUENCE [LARGE SCALE GENOMIC DNA]</scope>
    <source>
        <strain>SH0165</strain>
    </source>
</reference>
<gene>
    <name evidence="1" type="primary">rplL</name>
    <name type="ordered locus">HAPS_1410</name>
</gene>
<keyword id="KW-1185">Reference proteome</keyword>
<keyword id="KW-0687">Ribonucleoprotein</keyword>
<keyword id="KW-0689">Ribosomal protein</keyword>
<name>RL7_GLAP5</name>
<accession>B8F6N0</accession>
<sequence length="122" mass="12391">MSLTNEQIIEAIASKSVSEIVELITAMEEKFGVSAAAAAVAVAAGPAEAAEEKTEFDVILADAGANKVAVIKAVRGATGLGLKEAKDLVESAPAALKEGISKGEAEALKKELEEAGAKVEIK</sequence>
<protein>
    <recommendedName>
        <fullName evidence="1">Large ribosomal subunit protein bL12</fullName>
    </recommendedName>
    <alternativeName>
        <fullName evidence="2">50S ribosomal protein L7/L12</fullName>
    </alternativeName>
</protein>
<comment type="function">
    <text evidence="1">Forms part of the ribosomal stalk which helps the ribosome interact with GTP-bound translation factors. Is thus essential for accurate translation.</text>
</comment>
<comment type="subunit">
    <text evidence="1">Homodimer. Part of the ribosomal stalk of the 50S ribosomal subunit. Forms a multimeric L10(L12)X complex, where L10 forms an elongated spine to which 2 to 4 L12 dimers bind in a sequential fashion. Binds GTP-bound translation factors.</text>
</comment>
<comment type="similarity">
    <text evidence="1">Belongs to the bacterial ribosomal protein bL12 family.</text>
</comment>
<feature type="chain" id="PRO_1000195798" description="Large ribosomal subunit protein bL12">
    <location>
        <begin position="1"/>
        <end position="122"/>
    </location>
</feature>
<organism>
    <name type="scientific">Glaesserella parasuis serovar 5 (strain SH0165)</name>
    <name type="common">Haemophilus parasuis</name>
    <dbReference type="NCBI Taxonomy" id="557723"/>
    <lineage>
        <taxon>Bacteria</taxon>
        <taxon>Pseudomonadati</taxon>
        <taxon>Pseudomonadota</taxon>
        <taxon>Gammaproteobacteria</taxon>
        <taxon>Pasteurellales</taxon>
        <taxon>Pasteurellaceae</taxon>
        <taxon>Glaesserella</taxon>
    </lineage>
</organism>
<dbReference type="EMBL" id="CP001321">
    <property type="protein sequence ID" value="ACL32982.1"/>
    <property type="molecule type" value="Genomic_DNA"/>
</dbReference>
<dbReference type="RefSeq" id="WP_005714464.1">
    <property type="nucleotide sequence ID" value="NC_011852.1"/>
</dbReference>
<dbReference type="SMR" id="B8F6N0"/>
<dbReference type="STRING" id="557723.HAPS_1410"/>
<dbReference type="GeneID" id="66617774"/>
<dbReference type="KEGG" id="hap:HAPS_1410"/>
<dbReference type="HOGENOM" id="CLU_086499_3_2_6"/>
<dbReference type="Proteomes" id="UP000006743">
    <property type="component" value="Chromosome"/>
</dbReference>
<dbReference type="GO" id="GO:0022625">
    <property type="term" value="C:cytosolic large ribosomal subunit"/>
    <property type="evidence" value="ECO:0007669"/>
    <property type="project" value="TreeGrafter"/>
</dbReference>
<dbReference type="GO" id="GO:0003729">
    <property type="term" value="F:mRNA binding"/>
    <property type="evidence" value="ECO:0007669"/>
    <property type="project" value="TreeGrafter"/>
</dbReference>
<dbReference type="GO" id="GO:0003735">
    <property type="term" value="F:structural constituent of ribosome"/>
    <property type="evidence" value="ECO:0007669"/>
    <property type="project" value="InterPro"/>
</dbReference>
<dbReference type="GO" id="GO:0006412">
    <property type="term" value="P:translation"/>
    <property type="evidence" value="ECO:0007669"/>
    <property type="project" value="UniProtKB-UniRule"/>
</dbReference>
<dbReference type="CDD" id="cd00387">
    <property type="entry name" value="Ribosomal_L7_L12"/>
    <property type="match status" value="1"/>
</dbReference>
<dbReference type="FunFam" id="3.30.1390.10:FF:000001">
    <property type="entry name" value="50S ribosomal protein L7/L12"/>
    <property type="match status" value="1"/>
</dbReference>
<dbReference type="Gene3D" id="3.30.1390.10">
    <property type="match status" value="1"/>
</dbReference>
<dbReference type="Gene3D" id="1.20.5.710">
    <property type="entry name" value="Single helix bin"/>
    <property type="match status" value="1"/>
</dbReference>
<dbReference type="HAMAP" id="MF_00368">
    <property type="entry name" value="Ribosomal_bL12"/>
    <property type="match status" value="1"/>
</dbReference>
<dbReference type="InterPro" id="IPR000206">
    <property type="entry name" value="Ribosomal_bL12"/>
</dbReference>
<dbReference type="InterPro" id="IPR013823">
    <property type="entry name" value="Ribosomal_bL12_C"/>
</dbReference>
<dbReference type="InterPro" id="IPR014719">
    <property type="entry name" value="Ribosomal_bL12_C/ClpS-like"/>
</dbReference>
<dbReference type="InterPro" id="IPR008932">
    <property type="entry name" value="Ribosomal_bL12_oligo"/>
</dbReference>
<dbReference type="InterPro" id="IPR036235">
    <property type="entry name" value="Ribosomal_bL12_oligo_N_sf"/>
</dbReference>
<dbReference type="NCBIfam" id="TIGR00855">
    <property type="entry name" value="L12"/>
    <property type="match status" value="1"/>
</dbReference>
<dbReference type="PANTHER" id="PTHR45987">
    <property type="entry name" value="39S RIBOSOMAL PROTEIN L12"/>
    <property type="match status" value="1"/>
</dbReference>
<dbReference type="PANTHER" id="PTHR45987:SF4">
    <property type="entry name" value="LARGE RIBOSOMAL SUBUNIT PROTEIN BL12M"/>
    <property type="match status" value="1"/>
</dbReference>
<dbReference type="Pfam" id="PF00542">
    <property type="entry name" value="Ribosomal_L12"/>
    <property type="match status" value="1"/>
</dbReference>
<dbReference type="Pfam" id="PF16320">
    <property type="entry name" value="Ribosomal_L12_N"/>
    <property type="match status" value="1"/>
</dbReference>
<dbReference type="SUPFAM" id="SSF54736">
    <property type="entry name" value="ClpS-like"/>
    <property type="match status" value="1"/>
</dbReference>
<dbReference type="SUPFAM" id="SSF48300">
    <property type="entry name" value="Ribosomal protein L7/12, oligomerisation (N-terminal) domain"/>
    <property type="match status" value="1"/>
</dbReference>
<proteinExistence type="inferred from homology"/>